<protein>
    <recommendedName>
        <fullName evidence="1">1-deoxy-D-xylulose-5-phosphate synthase</fullName>
        <ecNumber evidence="1">2.2.1.7</ecNumber>
    </recommendedName>
    <alternativeName>
        <fullName evidence="1">1-deoxyxylulose-5-phosphate synthase</fullName>
        <shortName evidence="1">DXP synthase</shortName>
        <shortName evidence="1">DXPS</shortName>
    </alternativeName>
</protein>
<name>DXS_BURP1</name>
<dbReference type="EC" id="2.2.1.7" evidence="1"/>
<dbReference type="EMBL" id="CP000125">
    <property type="protein sequence ID" value="ABA53274.1"/>
    <property type="molecule type" value="Genomic_DNA"/>
</dbReference>
<dbReference type="RefSeq" id="WP_004266656.1">
    <property type="nucleotide sequence ID" value="NC_007435.1"/>
</dbReference>
<dbReference type="SMR" id="Q3JKA3"/>
<dbReference type="EnsemblBacteria" id="ABA53274">
    <property type="protein sequence ID" value="ABA53274"/>
    <property type="gene ID" value="BURPS1710b_A0842"/>
</dbReference>
<dbReference type="GeneID" id="93063969"/>
<dbReference type="KEGG" id="bpm:BURPS1710b_A0842"/>
<dbReference type="HOGENOM" id="CLU_009227_1_4_4"/>
<dbReference type="UniPathway" id="UPA00064">
    <property type="reaction ID" value="UER00091"/>
</dbReference>
<dbReference type="Proteomes" id="UP000002700">
    <property type="component" value="Chromosome II"/>
</dbReference>
<dbReference type="GO" id="GO:0005829">
    <property type="term" value="C:cytosol"/>
    <property type="evidence" value="ECO:0007669"/>
    <property type="project" value="TreeGrafter"/>
</dbReference>
<dbReference type="GO" id="GO:0008661">
    <property type="term" value="F:1-deoxy-D-xylulose-5-phosphate synthase activity"/>
    <property type="evidence" value="ECO:0007669"/>
    <property type="project" value="UniProtKB-UniRule"/>
</dbReference>
<dbReference type="GO" id="GO:0000287">
    <property type="term" value="F:magnesium ion binding"/>
    <property type="evidence" value="ECO:0007669"/>
    <property type="project" value="UniProtKB-UniRule"/>
</dbReference>
<dbReference type="GO" id="GO:0030976">
    <property type="term" value="F:thiamine pyrophosphate binding"/>
    <property type="evidence" value="ECO:0007669"/>
    <property type="project" value="UniProtKB-UniRule"/>
</dbReference>
<dbReference type="GO" id="GO:0052865">
    <property type="term" value="P:1-deoxy-D-xylulose 5-phosphate biosynthetic process"/>
    <property type="evidence" value="ECO:0007669"/>
    <property type="project" value="UniProtKB-UniPathway"/>
</dbReference>
<dbReference type="GO" id="GO:0019288">
    <property type="term" value="P:isopentenyl diphosphate biosynthetic process, methylerythritol 4-phosphate pathway"/>
    <property type="evidence" value="ECO:0007669"/>
    <property type="project" value="TreeGrafter"/>
</dbReference>
<dbReference type="GO" id="GO:0016114">
    <property type="term" value="P:terpenoid biosynthetic process"/>
    <property type="evidence" value="ECO:0007669"/>
    <property type="project" value="UniProtKB-UniRule"/>
</dbReference>
<dbReference type="GO" id="GO:0009228">
    <property type="term" value="P:thiamine biosynthetic process"/>
    <property type="evidence" value="ECO:0007669"/>
    <property type="project" value="UniProtKB-UniRule"/>
</dbReference>
<dbReference type="CDD" id="cd02007">
    <property type="entry name" value="TPP_DXS"/>
    <property type="match status" value="1"/>
</dbReference>
<dbReference type="CDD" id="cd07033">
    <property type="entry name" value="TPP_PYR_DXS_TK_like"/>
    <property type="match status" value="1"/>
</dbReference>
<dbReference type="FunFam" id="3.40.50.920:FF:000002">
    <property type="entry name" value="1-deoxy-D-xylulose-5-phosphate synthase"/>
    <property type="match status" value="1"/>
</dbReference>
<dbReference type="FunFam" id="3.40.50.970:FF:000005">
    <property type="entry name" value="1-deoxy-D-xylulose-5-phosphate synthase"/>
    <property type="match status" value="1"/>
</dbReference>
<dbReference type="Gene3D" id="3.40.50.920">
    <property type="match status" value="1"/>
</dbReference>
<dbReference type="Gene3D" id="3.40.50.970">
    <property type="match status" value="2"/>
</dbReference>
<dbReference type="HAMAP" id="MF_00315">
    <property type="entry name" value="DXP_synth"/>
    <property type="match status" value="1"/>
</dbReference>
<dbReference type="InterPro" id="IPR005477">
    <property type="entry name" value="Dxylulose-5-P_synthase"/>
</dbReference>
<dbReference type="InterPro" id="IPR029061">
    <property type="entry name" value="THDP-binding"/>
</dbReference>
<dbReference type="InterPro" id="IPR009014">
    <property type="entry name" value="Transketo_C/PFOR_II"/>
</dbReference>
<dbReference type="InterPro" id="IPR005475">
    <property type="entry name" value="Transketolase-like_Pyr-bd"/>
</dbReference>
<dbReference type="InterPro" id="IPR020826">
    <property type="entry name" value="Transketolase_BS"/>
</dbReference>
<dbReference type="InterPro" id="IPR033248">
    <property type="entry name" value="Transketolase_C"/>
</dbReference>
<dbReference type="InterPro" id="IPR049557">
    <property type="entry name" value="Transketolase_CS"/>
</dbReference>
<dbReference type="NCBIfam" id="TIGR00204">
    <property type="entry name" value="dxs"/>
    <property type="match status" value="1"/>
</dbReference>
<dbReference type="NCBIfam" id="NF003933">
    <property type="entry name" value="PRK05444.2-2"/>
    <property type="match status" value="1"/>
</dbReference>
<dbReference type="PANTHER" id="PTHR43322">
    <property type="entry name" value="1-D-DEOXYXYLULOSE 5-PHOSPHATE SYNTHASE-RELATED"/>
    <property type="match status" value="1"/>
</dbReference>
<dbReference type="PANTHER" id="PTHR43322:SF5">
    <property type="entry name" value="1-DEOXY-D-XYLULOSE-5-PHOSPHATE SYNTHASE, CHLOROPLASTIC"/>
    <property type="match status" value="1"/>
</dbReference>
<dbReference type="Pfam" id="PF13292">
    <property type="entry name" value="DXP_synthase_N"/>
    <property type="match status" value="1"/>
</dbReference>
<dbReference type="Pfam" id="PF02779">
    <property type="entry name" value="Transket_pyr"/>
    <property type="match status" value="1"/>
</dbReference>
<dbReference type="Pfam" id="PF02780">
    <property type="entry name" value="Transketolase_C"/>
    <property type="match status" value="1"/>
</dbReference>
<dbReference type="SMART" id="SM00861">
    <property type="entry name" value="Transket_pyr"/>
    <property type="match status" value="1"/>
</dbReference>
<dbReference type="SUPFAM" id="SSF52518">
    <property type="entry name" value="Thiamin diphosphate-binding fold (THDP-binding)"/>
    <property type="match status" value="2"/>
</dbReference>
<dbReference type="SUPFAM" id="SSF52922">
    <property type="entry name" value="TK C-terminal domain-like"/>
    <property type="match status" value="1"/>
</dbReference>
<dbReference type="PROSITE" id="PS00801">
    <property type="entry name" value="TRANSKETOLASE_1"/>
    <property type="match status" value="1"/>
</dbReference>
<dbReference type="PROSITE" id="PS00802">
    <property type="entry name" value="TRANSKETOLASE_2"/>
    <property type="match status" value="1"/>
</dbReference>
<feature type="chain" id="PRO_0000256389" description="1-deoxy-D-xylulose-5-phosphate synthase">
    <location>
        <begin position="1"/>
        <end position="634"/>
    </location>
</feature>
<feature type="binding site" evidence="1">
    <location>
        <position position="74"/>
    </location>
    <ligand>
        <name>thiamine diphosphate</name>
        <dbReference type="ChEBI" id="CHEBI:58937"/>
    </ligand>
</feature>
<feature type="binding site" evidence="1">
    <location>
        <begin position="115"/>
        <end position="117"/>
    </location>
    <ligand>
        <name>thiamine diphosphate</name>
        <dbReference type="ChEBI" id="CHEBI:58937"/>
    </ligand>
</feature>
<feature type="binding site" evidence="1">
    <location>
        <position position="146"/>
    </location>
    <ligand>
        <name>Mg(2+)</name>
        <dbReference type="ChEBI" id="CHEBI:18420"/>
    </ligand>
</feature>
<feature type="binding site" evidence="1">
    <location>
        <begin position="147"/>
        <end position="148"/>
    </location>
    <ligand>
        <name>thiamine diphosphate</name>
        <dbReference type="ChEBI" id="CHEBI:58937"/>
    </ligand>
</feature>
<feature type="binding site" evidence="1">
    <location>
        <position position="176"/>
    </location>
    <ligand>
        <name>Mg(2+)</name>
        <dbReference type="ChEBI" id="CHEBI:18420"/>
    </ligand>
</feature>
<feature type="binding site" evidence="1">
    <location>
        <position position="176"/>
    </location>
    <ligand>
        <name>thiamine diphosphate</name>
        <dbReference type="ChEBI" id="CHEBI:58937"/>
    </ligand>
</feature>
<feature type="binding site" evidence="1">
    <location>
        <position position="283"/>
    </location>
    <ligand>
        <name>thiamine diphosphate</name>
        <dbReference type="ChEBI" id="CHEBI:58937"/>
    </ligand>
</feature>
<feature type="binding site" evidence="1">
    <location>
        <position position="365"/>
    </location>
    <ligand>
        <name>thiamine diphosphate</name>
        <dbReference type="ChEBI" id="CHEBI:58937"/>
    </ligand>
</feature>
<gene>
    <name evidence="1" type="primary">dxs</name>
    <name type="ordered locus">BURPS1710b_A0842</name>
</gene>
<comment type="function">
    <text evidence="1">Catalyzes the acyloin condensation reaction between C atoms 2 and 3 of pyruvate and glyceraldehyde 3-phosphate to yield 1-deoxy-D-xylulose-5-phosphate (DXP).</text>
</comment>
<comment type="catalytic activity">
    <reaction evidence="1">
        <text>D-glyceraldehyde 3-phosphate + pyruvate + H(+) = 1-deoxy-D-xylulose 5-phosphate + CO2</text>
        <dbReference type="Rhea" id="RHEA:12605"/>
        <dbReference type="ChEBI" id="CHEBI:15361"/>
        <dbReference type="ChEBI" id="CHEBI:15378"/>
        <dbReference type="ChEBI" id="CHEBI:16526"/>
        <dbReference type="ChEBI" id="CHEBI:57792"/>
        <dbReference type="ChEBI" id="CHEBI:59776"/>
        <dbReference type="EC" id="2.2.1.7"/>
    </reaction>
</comment>
<comment type="cofactor">
    <cofactor evidence="1">
        <name>Mg(2+)</name>
        <dbReference type="ChEBI" id="CHEBI:18420"/>
    </cofactor>
    <text evidence="1">Binds 1 Mg(2+) ion per subunit.</text>
</comment>
<comment type="cofactor">
    <cofactor evidence="1">
        <name>thiamine diphosphate</name>
        <dbReference type="ChEBI" id="CHEBI:58937"/>
    </cofactor>
    <text evidence="1">Binds 1 thiamine pyrophosphate per subunit.</text>
</comment>
<comment type="pathway">
    <text evidence="1">Metabolic intermediate biosynthesis; 1-deoxy-D-xylulose 5-phosphate biosynthesis; 1-deoxy-D-xylulose 5-phosphate from D-glyceraldehyde 3-phosphate and pyruvate: step 1/1.</text>
</comment>
<comment type="subunit">
    <text evidence="1">Homodimer.</text>
</comment>
<comment type="similarity">
    <text evidence="1">Belongs to the transketolase family. DXPS subfamily.</text>
</comment>
<accession>Q3JKA3</accession>
<keyword id="KW-0414">Isoprene biosynthesis</keyword>
<keyword id="KW-0460">Magnesium</keyword>
<keyword id="KW-0479">Metal-binding</keyword>
<keyword id="KW-0784">Thiamine biosynthesis</keyword>
<keyword id="KW-0786">Thiamine pyrophosphate</keyword>
<keyword id="KW-0808">Transferase</keyword>
<reference key="1">
    <citation type="journal article" date="2010" name="Genome Biol. Evol.">
        <title>Continuing evolution of Burkholderia mallei through genome reduction and large-scale rearrangements.</title>
        <authorList>
            <person name="Losada L."/>
            <person name="Ronning C.M."/>
            <person name="DeShazer D."/>
            <person name="Woods D."/>
            <person name="Fedorova N."/>
            <person name="Kim H.S."/>
            <person name="Shabalina S.A."/>
            <person name="Pearson T.R."/>
            <person name="Brinkac L."/>
            <person name="Tan P."/>
            <person name="Nandi T."/>
            <person name="Crabtree J."/>
            <person name="Badger J."/>
            <person name="Beckstrom-Sternberg S."/>
            <person name="Saqib M."/>
            <person name="Schutzer S.E."/>
            <person name="Keim P."/>
            <person name="Nierman W.C."/>
        </authorList>
    </citation>
    <scope>NUCLEOTIDE SEQUENCE [LARGE SCALE GENOMIC DNA]</scope>
    <source>
        <strain>1710b</strain>
    </source>
</reference>
<proteinExistence type="inferred from homology"/>
<evidence type="ECO:0000255" key="1">
    <source>
        <dbReference type="HAMAP-Rule" id="MF_00315"/>
    </source>
</evidence>
<sequence length="634" mass="68281">MYDLLKTIDDPADLRRLDRRQLQPLADELRAFVLDSVSKTGGHLSSNLGTVELTIALHYVFNTPDDRIVWDVGHQTYPHKILTGRRDGMKTLRQFDGISGFPRRSESEYDTFGTAHSSTSISAALGMAIGSKLNGDDRFSIAVIGDGAMTAGMAFEAMNNAGVSEDAKLLVILNDNDMSISPPVGALNRHLARLMSGRFYAAARAGVERVLSVAPPVLELARKLEEHAKGMVVPATLFEEFGFNYIGPIDGHDLDSLIPTLQNIKELRGPQFLHVVTKKGQGYKLAEADPVLYHGPGKFNPAEGIKPSTTPAKKTYTQVFGEWLCDAAELDARVVGITPAMREGSGMVEFEKRFPERYYDVGIAEQHAVTFAGGLATEGLKPVVAIYSTFLQRAYDQLIHDVALQNLPVVFAIDRAGLVGADGATHAGAYDLAFLRCIPNMTVMAASDENECRQMLHTALQQPNPTAVRYPRGAGTGVATVKAFTEIPLGKGEVRRRTSQPDGKRIAILAFGTMVAPSLAAADALDATVANMRFVKPIDAELVQALARTHDYLVTVEEGCVMGGAGSACVEAMMESGAVRPVLQLGLPDRFVDHGDPAKLLSLCGLDGDGIAKSIRERFLSHAADVASPAKRVA</sequence>
<organism>
    <name type="scientific">Burkholderia pseudomallei (strain 1710b)</name>
    <dbReference type="NCBI Taxonomy" id="320372"/>
    <lineage>
        <taxon>Bacteria</taxon>
        <taxon>Pseudomonadati</taxon>
        <taxon>Pseudomonadota</taxon>
        <taxon>Betaproteobacteria</taxon>
        <taxon>Burkholderiales</taxon>
        <taxon>Burkholderiaceae</taxon>
        <taxon>Burkholderia</taxon>
        <taxon>pseudomallei group</taxon>
    </lineage>
</organism>